<comment type="function">
    <text evidence="1">DNA ligase that catalyzes the formation of phosphodiester linkages between 5'-phosphoryl and 3'-hydroxyl groups in double-stranded DNA using NAD as a coenzyme and as the energy source for the reaction. It is essential for DNA replication and repair of damaged DNA.</text>
</comment>
<comment type="catalytic activity">
    <reaction evidence="1">
        <text>NAD(+) + (deoxyribonucleotide)n-3'-hydroxyl + 5'-phospho-(deoxyribonucleotide)m = (deoxyribonucleotide)n+m + AMP + beta-nicotinamide D-nucleotide.</text>
        <dbReference type="EC" id="6.5.1.2"/>
    </reaction>
</comment>
<comment type="cofactor">
    <cofactor evidence="1">
        <name>Mg(2+)</name>
        <dbReference type="ChEBI" id="CHEBI:18420"/>
    </cofactor>
    <cofactor evidence="1">
        <name>Mn(2+)</name>
        <dbReference type="ChEBI" id="CHEBI:29035"/>
    </cofactor>
</comment>
<comment type="similarity">
    <text evidence="1">Belongs to the NAD-dependent DNA ligase family. LigA subfamily.</text>
</comment>
<protein>
    <recommendedName>
        <fullName evidence="1">DNA ligase</fullName>
        <ecNumber evidence="1">6.5.1.2</ecNumber>
    </recommendedName>
    <alternativeName>
        <fullName evidence="1">Polydeoxyribonucleotide synthase [NAD(+)]</fullName>
    </alternativeName>
</protein>
<proteinExistence type="inferred from homology"/>
<sequence length="681" mass="77043">MSKKKKTYQNTLSEKEAKKVIAKLADEIRHHQYLYYVKNQPEISDFDFDQLFKRLRDLEEEFPQFKDLNSPTLVVGSDLDKDFEKFQHKLPVLSLINTYNDDELLDWVNKTDPDGLYSVEWKIDGASIVLYYENGMLKNGVTRGSGGIGDDVTDNIRTVRNIPLRLPEPITVYLRGEVFMTFKDFEEFNELSSGKYANPRNLSAGSIKQKNSADTAKRPLRIFTYDATFPGFTKKFKTHQQILSKLEKLTFPVPPDTVFVNGSKIAETIKDFKKKKDTLGFPTDGLVIKLNDISKRDAQGYTSHSPRWARAYKFDAIMKESRIVDITYAVGRTGKITPRVEIEPVNLAGTTVTFATLHNQDYIDELGVGIGAIVRVAKRGEIIPAVEEVITPGKDVFKIPDYCPSCKTKTIKKENLVDLFCPNPDCPDRVKNGIIFYCQRKQMDIEGLGDKQIEFLYDHGYIRSIADLYDLKDQKEKLMEEEGFGEKSLAIIFNGIEHSKQKDFRFLLPSIGLPELGHKVTELLIEHGIDSIDEILSIAKDKKRISSLLEIPGIGPSTIKAFEENFSDKRILKLIARLKNAGLKLKADPIKVSDQQPFAGQSWCVTGSFENFQPRDKAMDLVVYYGGRKVSAVSSKTTHLLAGPGAGSKLEKANELGIVVYNEKQFLDLLKSLKINFKNTI</sequence>
<gene>
    <name evidence="1" type="primary">ligA</name>
    <name type="ordered locus">LBJ_0176</name>
</gene>
<keyword id="KW-0227">DNA damage</keyword>
<keyword id="KW-0234">DNA repair</keyword>
<keyword id="KW-0235">DNA replication</keyword>
<keyword id="KW-0436">Ligase</keyword>
<keyword id="KW-0460">Magnesium</keyword>
<keyword id="KW-0464">Manganese</keyword>
<keyword id="KW-0479">Metal-binding</keyword>
<keyword id="KW-0520">NAD</keyword>
<keyword id="KW-0862">Zinc</keyword>
<organism>
    <name type="scientific">Leptospira borgpetersenii serovar Hardjo-bovis (strain JB197)</name>
    <dbReference type="NCBI Taxonomy" id="355277"/>
    <lineage>
        <taxon>Bacteria</taxon>
        <taxon>Pseudomonadati</taxon>
        <taxon>Spirochaetota</taxon>
        <taxon>Spirochaetia</taxon>
        <taxon>Leptospirales</taxon>
        <taxon>Leptospiraceae</taxon>
        <taxon>Leptospira</taxon>
    </lineage>
</organism>
<accession>Q04W02</accession>
<dbReference type="EC" id="6.5.1.2" evidence="1"/>
<dbReference type="EMBL" id="CP000350">
    <property type="protein sequence ID" value="ABJ74918.1"/>
    <property type="molecule type" value="Genomic_DNA"/>
</dbReference>
<dbReference type="RefSeq" id="WP_011671466.1">
    <property type="nucleotide sequence ID" value="NC_008510.1"/>
</dbReference>
<dbReference type="SMR" id="Q04W02"/>
<dbReference type="KEGG" id="lbj:LBJ_0176"/>
<dbReference type="HOGENOM" id="CLU_007764_2_1_12"/>
<dbReference type="Proteomes" id="UP000000656">
    <property type="component" value="Chromosome 1"/>
</dbReference>
<dbReference type="GO" id="GO:0003911">
    <property type="term" value="F:DNA ligase (NAD+) activity"/>
    <property type="evidence" value="ECO:0007669"/>
    <property type="project" value="UniProtKB-UniRule"/>
</dbReference>
<dbReference type="GO" id="GO:0046872">
    <property type="term" value="F:metal ion binding"/>
    <property type="evidence" value="ECO:0007669"/>
    <property type="project" value="UniProtKB-KW"/>
</dbReference>
<dbReference type="GO" id="GO:0006281">
    <property type="term" value="P:DNA repair"/>
    <property type="evidence" value="ECO:0007669"/>
    <property type="project" value="UniProtKB-KW"/>
</dbReference>
<dbReference type="GO" id="GO:0006260">
    <property type="term" value="P:DNA replication"/>
    <property type="evidence" value="ECO:0007669"/>
    <property type="project" value="UniProtKB-KW"/>
</dbReference>
<dbReference type="CDD" id="cd17748">
    <property type="entry name" value="BRCT_DNA_ligase_like"/>
    <property type="match status" value="1"/>
</dbReference>
<dbReference type="CDD" id="cd00114">
    <property type="entry name" value="LIGANc"/>
    <property type="match status" value="1"/>
</dbReference>
<dbReference type="FunFam" id="1.10.150.20:FF:000007">
    <property type="entry name" value="DNA ligase"/>
    <property type="match status" value="1"/>
</dbReference>
<dbReference type="FunFam" id="3.30.470.30:FF:000026">
    <property type="entry name" value="DNA ligase"/>
    <property type="match status" value="1"/>
</dbReference>
<dbReference type="FunFam" id="3.40.50.10190:FF:000087">
    <property type="entry name" value="DNA ligase"/>
    <property type="match status" value="1"/>
</dbReference>
<dbReference type="Gene3D" id="1.10.150.20">
    <property type="entry name" value="5' to 3' exonuclease, C-terminal subdomain"/>
    <property type="match status" value="2"/>
</dbReference>
<dbReference type="Gene3D" id="3.40.50.10190">
    <property type="entry name" value="BRCT domain"/>
    <property type="match status" value="1"/>
</dbReference>
<dbReference type="Gene3D" id="3.30.470.30">
    <property type="entry name" value="DNA ligase/mRNA capping enzyme"/>
    <property type="match status" value="1"/>
</dbReference>
<dbReference type="Gene3D" id="1.10.287.610">
    <property type="entry name" value="Helix hairpin bin"/>
    <property type="match status" value="1"/>
</dbReference>
<dbReference type="Gene3D" id="2.40.50.140">
    <property type="entry name" value="Nucleic acid-binding proteins"/>
    <property type="match status" value="1"/>
</dbReference>
<dbReference type="HAMAP" id="MF_01588">
    <property type="entry name" value="DNA_ligase_A"/>
    <property type="match status" value="1"/>
</dbReference>
<dbReference type="InterPro" id="IPR001357">
    <property type="entry name" value="BRCT_dom"/>
</dbReference>
<dbReference type="InterPro" id="IPR036420">
    <property type="entry name" value="BRCT_dom_sf"/>
</dbReference>
<dbReference type="InterPro" id="IPR001679">
    <property type="entry name" value="DNA_ligase"/>
</dbReference>
<dbReference type="InterPro" id="IPR013839">
    <property type="entry name" value="DNAligase_adenylation"/>
</dbReference>
<dbReference type="InterPro" id="IPR013840">
    <property type="entry name" value="DNAligase_N"/>
</dbReference>
<dbReference type="InterPro" id="IPR012340">
    <property type="entry name" value="NA-bd_OB-fold"/>
</dbReference>
<dbReference type="InterPro" id="IPR004150">
    <property type="entry name" value="NAD_DNA_ligase_OB"/>
</dbReference>
<dbReference type="InterPro" id="IPR010994">
    <property type="entry name" value="RuvA_2-like"/>
</dbReference>
<dbReference type="InterPro" id="IPR004149">
    <property type="entry name" value="Znf_DNAligase_C4"/>
</dbReference>
<dbReference type="NCBIfam" id="TIGR00575">
    <property type="entry name" value="dnlj"/>
    <property type="match status" value="1"/>
</dbReference>
<dbReference type="NCBIfam" id="NF005932">
    <property type="entry name" value="PRK07956.1"/>
    <property type="match status" value="1"/>
</dbReference>
<dbReference type="Pfam" id="PF00533">
    <property type="entry name" value="BRCT"/>
    <property type="match status" value="1"/>
</dbReference>
<dbReference type="Pfam" id="PF01653">
    <property type="entry name" value="DNA_ligase_aden"/>
    <property type="match status" value="1"/>
</dbReference>
<dbReference type="Pfam" id="PF03120">
    <property type="entry name" value="DNA_ligase_OB"/>
    <property type="match status" value="1"/>
</dbReference>
<dbReference type="Pfam" id="PF03119">
    <property type="entry name" value="DNA_ligase_ZBD"/>
    <property type="match status" value="1"/>
</dbReference>
<dbReference type="Pfam" id="PF14520">
    <property type="entry name" value="HHH_5"/>
    <property type="match status" value="2"/>
</dbReference>
<dbReference type="Pfam" id="PF22745">
    <property type="entry name" value="Nlig-Ia"/>
    <property type="match status" value="1"/>
</dbReference>
<dbReference type="PIRSF" id="PIRSF001604">
    <property type="entry name" value="LigA"/>
    <property type="match status" value="1"/>
</dbReference>
<dbReference type="SMART" id="SM00292">
    <property type="entry name" value="BRCT"/>
    <property type="match status" value="1"/>
</dbReference>
<dbReference type="SMART" id="SM00532">
    <property type="entry name" value="LIGANc"/>
    <property type="match status" value="1"/>
</dbReference>
<dbReference type="SUPFAM" id="SSF52113">
    <property type="entry name" value="BRCT domain"/>
    <property type="match status" value="1"/>
</dbReference>
<dbReference type="SUPFAM" id="SSF56091">
    <property type="entry name" value="DNA ligase/mRNA capping enzyme, catalytic domain"/>
    <property type="match status" value="1"/>
</dbReference>
<dbReference type="SUPFAM" id="SSF50249">
    <property type="entry name" value="Nucleic acid-binding proteins"/>
    <property type="match status" value="1"/>
</dbReference>
<dbReference type="SUPFAM" id="SSF47781">
    <property type="entry name" value="RuvA domain 2-like"/>
    <property type="match status" value="1"/>
</dbReference>
<dbReference type="PROSITE" id="PS50172">
    <property type="entry name" value="BRCT"/>
    <property type="match status" value="1"/>
</dbReference>
<reference key="1">
    <citation type="journal article" date="2006" name="Proc. Natl. Acad. Sci. U.S.A.">
        <title>Genome reduction in Leptospira borgpetersenii reflects limited transmission potential.</title>
        <authorList>
            <person name="Bulach D.M."/>
            <person name="Zuerner R.L."/>
            <person name="Wilson P."/>
            <person name="Seemann T."/>
            <person name="McGrath A."/>
            <person name="Cullen P.A."/>
            <person name="Davis J."/>
            <person name="Johnson M."/>
            <person name="Kuczek E."/>
            <person name="Alt D.P."/>
            <person name="Peterson-Burch B."/>
            <person name="Coppel R.L."/>
            <person name="Rood J.I."/>
            <person name="Davies J.K."/>
            <person name="Adler B."/>
        </authorList>
    </citation>
    <scope>NUCLEOTIDE SEQUENCE [LARGE SCALE GENOMIC DNA]</scope>
    <source>
        <strain>JB197</strain>
    </source>
</reference>
<feature type="chain" id="PRO_0000313290" description="DNA ligase">
    <location>
        <begin position="1"/>
        <end position="681"/>
    </location>
</feature>
<feature type="domain" description="BRCT" evidence="1">
    <location>
        <begin position="593"/>
        <end position="681"/>
    </location>
</feature>
<feature type="active site" description="N6-AMP-lysine intermediate" evidence="1">
    <location>
        <position position="122"/>
    </location>
</feature>
<feature type="binding site" evidence="1">
    <location>
        <begin position="45"/>
        <end position="49"/>
    </location>
    <ligand>
        <name>NAD(+)</name>
        <dbReference type="ChEBI" id="CHEBI:57540"/>
    </ligand>
</feature>
<feature type="binding site" evidence="1">
    <location>
        <begin position="94"/>
        <end position="95"/>
    </location>
    <ligand>
        <name>NAD(+)</name>
        <dbReference type="ChEBI" id="CHEBI:57540"/>
    </ligand>
</feature>
<feature type="binding site" evidence="1">
    <location>
        <position position="120"/>
    </location>
    <ligand>
        <name>NAD(+)</name>
        <dbReference type="ChEBI" id="CHEBI:57540"/>
    </ligand>
</feature>
<feature type="binding site" evidence="1">
    <location>
        <position position="143"/>
    </location>
    <ligand>
        <name>NAD(+)</name>
        <dbReference type="ChEBI" id="CHEBI:57540"/>
    </ligand>
</feature>
<feature type="binding site" evidence="1">
    <location>
        <position position="177"/>
    </location>
    <ligand>
        <name>NAD(+)</name>
        <dbReference type="ChEBI" id="CHEBI:57540"/>
    </ligand>
</feature>
<feature type="binding site" evidence="1">
    <location>
        <position position="289"/>
    </location>
    <ligand>
        <name>NAD(+)</name>
        <dbReference type="ChEBI" id="CHEBI:57540"/>
    </ligand>
</feature>
<feature type="binding site" evidence="1">
    <location>
        <position position="313"/>
    </location>
    <ligand>
        <name>NAD(+)</name>
        <dbReference type="ChEBI" id="CHEBI:57540"/>
    </ligand>
</feature>
<feature type="binding site" evidence="1">
    <location>
        <position position="403"/>
    </location>
    <ligand>
        <name>Zn(2+)</name>
        <dbReference type="ChEBI" id="CHEBI:29105"/>
    </ligand>
</feature>
<feature type="binding site" evidence="1">
    <location>
        <position position="406"/>
    </location>
    <ligand>
        <name>Zn(2+)</name>
        <dbReference type="ChEBI" id="CHEBI:29105"/>
    </ligand>
</feature>
<feature type="binding site" evidence="1">
    <location>
        <position position="421"/>
    </location>
    <ligand>
        <name>Zn(2+)</name>
        <dbReference type="ChEBI" id="CHEBI:29105"/>
    </ligand>
</feature>
<feature type="binding site" evidence="1">
    <location>
        <position position="426"/>
    </location>
    <ligand>
        <name>Zn(2+)</name>
        <dbReference type="ChEBI" id="CHEBI:29105"/>
    </ligand>
</feature>
<evidence type="ECO:0000255" key="1">
    <source>
        <dbReference type="HAMAP-Rule" id="MF_01588"/>
    </source>
</evidence>
<name>DNLJ_LEPBJ</name>